<reference key="1">
    <citation type="journal article" date="2001" name="Microb. Drug Resist.">
        <title>Annotated draft genomic sequence from a Streptococcus pneumoniae type 19F clinical isolate.</title>
        <authorList>
            <person name="Dopazo J."/>
            <person name="Mendoza A."/>
            <person name="Herrero J."/>
            <person name="Caldara F."/>
            <person name="Humbert Y."/>
            <person name="Friedli L."/>
            <person name="Guerrier M."/>
            <person name="Grand-Schenk E."/>
            <person name="Gandin C."/>
            <person name="de Francesco M."/>
            <person name="Polissi A."/>
            <person name="Buell G."/>
            <person name="Feger G."/>
            <person name="Garcia E."/>
            <person name="Peitsch M."/>
            <person name="Garcia-Bustos J.F."/>
        </authorList>
    </citation>
    <scope>NUCLEOTIDE SEQUENCE [LARGE SCALE GENOMIC DNA]</scope>
    <source>
        <strain>G54</strain>
    </source>
</reference>
<reference key="2">
    <citation type="submission" date="2008-03" db="EMBL/GenBank/DDBJ databases">
        <title>Pneumococcal beta glucoside metabolism investigated by whole genome comparison.</title>
        <authorList>
            <person name="Mulas L."/>
            <person name="Trappetti C."/>
            <person name="Hakenbeck R."/>
            <person name="Iannelli F."/>
            <person name="Pozzi G."/>
            <person name="Davidsen T.M."/>
            <person name="Tettelin H."/>
            <person name="Oggioni M."/>
        </authorList>
    </citation>
    <scope>NUCLEOTIDE SEQUENCE [LARGE SCALE GENOMIC DNA]</scope>
    <source>
        <strain>G54</strain>
    </source>
</reference>
<proteinExistence type="inferred from homology"/>
<comment type="function">
    <text evidence="1">Phosphorylation of dTMP to form dTDP in both de novo and salvage pathways of dTTP synthesis.</text>
</comment>
<comment type="catalytic activity">
    <reaction evidence="1">
        <text>dTMP + ATP = dTDP + ADP</text>
        <dbReference type="Rhea" id="RHEA:13517"/>
        <dbReference type="ChEBI" id="CHEBI:30616"/>
        <dbReference type="ChEBI" id="CHEBI:58369"/>
        <dbReference type="ChEBI" id="CHEBI:63528"/>
        <dbReference type="ChEBI" id="CHEBI:456216"/>
        <dbReference type="EC" id="2.7.4.9"/>
    </reaction>
</comment>
<comment type="similarity">
    <text evidence="1">Belongs to the thymidylate kinase family.</text>
</comment>
<gene>
    <name evidence="1" type="primary">tmk</name>
    <name type="ordered locus">SPG_0861</name>
</gene>
<feature type="chain" id="PRO_1000097431" description="Thymidylate kinase">
    <location>
        <begin position="1"/>
        <end position="212"/>
    </location>
</feature>
<feature type="binding site" evidence="1">
    <location>
        <begin position="11"/>
        <end position="18"/>
    </location>
    <ligand>
        <name>ATP</name>
        <dbReference type="ChEBI" id="CHEBI:30616"/>
    </ligand>
</feature>
<protein>
    <recommendedName>
        <fullName evidence="1">Thymidylate kinase</fullName>
        <ecNumber evidence="1">2.7.4.9</ecNumber>
    </recommendedName>
    <alternativeName>
        <fullName evidence="1">dTMP kinase</fullName>
    </alternativeName>
</protein>
<accession>B5E437</accession>
<dbReference type="EC" id="2.7.4.9" evidence="1"/>
<dbReference type="EMBL" id="CP001015">
    <property type="protein sequence ID" value="ACF55607.1"/>
    <property type="molecule type" value="Genomic_DNA"/>
</dbReference>
<dbReference type="SMR" id="B5E437"/>
<dbReference type="KEGG" id="spx:SPG_0861"/>
<dbReference type="HOGENOM" id="CLU_049131_0_2_9"/>
<dbReference type="GO" id="GO:0005829">
    <property type="term" value="C:cytosol"/>
    <property type="evidence" value="ECO:0007669"/>
    <property type="project" value="TreeGrafter"/>
</dbReference>
<dbReference type="GO" id="GO:0005524">
    <property type="term" value="F:ATP binding"/>
    <property type="evidence" value="ECO:0007669"/>
    <property type="project" value="UniProtKB-UniRule"/>
</dbReference>
<dbReference type="GO" id="GO:0004798">
    <property type="term" value="F:dTMP kinase activity"/>
    <property type="evidence" value="ECO:0007669"/>
    <property type="project" value="UniProtKB-UniRule"/>
</dbReference>
<dbReference type="GO" id="GO:0006233">
    <property type="term" value="P:dTDP biosynthetic process"/>
    <property type="evidence" value="ECO:0007669"/>
    <property type="project" value="InterPro"/>
</dbReference>
<dbReference type="GO" id="GO:0006235">
    <property type="term" value="P:dTTP biosynthetic process"/>
    <property type="evidence" value="ECO:0007669"/>
    <property type="project" value="UniProtKB-UniRule"/>
</dbReference>
<dbReference type="GO" id="GO:0006227">
    <property type="term" value="P:dUDP biosynthetic process"/>
    <property type="evidence" value="ECO:0007669"/>
    <property type="project" value="TreeGrafter"/>
</dbReference>
<dbReference type="CDD" id="cd01672">
    <property type="entry name" value="TMPK"/>
    <property type="match status" value="1"/>
</dbReference>
<dbReference type="FunFam" id="3.40.50.300:FF:000225">
    <property type="entry name" value="Thymidylate kinase"/>
    <property type="match status" value="1"/>
</dbReference>
<dbReference type="Gene3D" id="3.40.50.300">
    <property type="entry name" value="P-loop containing nucleotide triphosphate hydrolases"/>
    <property type="match status" value="1"/>
</dbReference>
<dbReference type="HAMAP" id="MF_00165">
    <property type="entry name" value="Thymidylate_kinase"/>
    <property type="match status" value="1"/>
</dbReference>
<dbReference type="InterPro" id="IPR027417">
    <property type="entry name" value="P-loop_NTPase"/>
</dbReference>
<dbReference type="InterPro" id="IPR039430">
    <property type="entry name" value="Thymidylate_kin-like_dom"/>
</dbReference>
<dbReference type="InterPro" id="IPR018095">
    <property type="entry name" value="Thymidylate_kin_CS"/>
</dbReference>
<dbReference type="InterPro" id="IPR018094">
    <property type="entry name" value="Thymidylate_kinase"/>
</dbReference>
<dbReference type="NCBIfam" id="TIGR00041">
    <property type="entry name" value="DTMP_kinase"/>
    <property type="match status" value="1"/>
</dbReference>
<dbReference type="PANTHER" id="PTHR10344">
    <property type="entry name" value="THYMIDYLATE KINASE"/>
    <property type="match status" value="1"/>
</dbReference>
<dbReference type="PANTHER" id="PTHR10344:SF4">
    <property type="entry name" value="UMP-CMP KINASE 2, MITOCHONDRIAL"/>
    <property type="match status" value="1"/>
</dbReference>
<dbReference type="Pfam" id="PF02223">
    <property type="entry name" value="Thymidylate_kin"/>
    <property type="match status" value="1"/>
</dbReference>
<dbReference type="SUPFAM" id="SSF52540">
    <property type="entry name" value="P-loop containing nucleoside triphosphate hydrolases"/>
    <property type="match status" value="1"/>
</dbReference>
<dbReference type="PROSITE" id="PS01331">
    <property type="entry name" value="THYMIDYLATE_KINASE"/>
    <property type="match status" value="1"/>
</dbReference>
<organism>
    <name type="scientific">Streptococcus pneumoniae serotype 19F (strain G54)</name>
    <dbReference type="NCBI Taxonomy" id="512566"/>
    <lineage>
        <taxon>Bacteria</taxon>
        <taxon>Bacillati</taxon>
        <taxon>Bacillota</taxon>
        <taxon>Bacilli</taxon>
        <taxon>Lactobacillales</taxon>
        <taxon>Streptococcaceae</taxon>
        <taxon>Streptococcus</taxon>
    </lineage>
</organism>
<name>KTHY_STRP4</name>
<keyword id="KW-0067">ATP-binding</keyword>
<keyword id="KW-0418">Kinase</keyword>
<keyword id="KW-0545">Nucleotide biosynthesis</keyword>
<keyword id="KW-0547">Nucleotide-binding</keyword>
<keyword id="KW-0808">Transferase</keyword>
<sequence>MSKGFLVSLEGPEGAGKTSVLEALLPILEEKGVEVLTTREPGGVLIGEKIREVILDPSHTQMDAKTELLLYIASRRQHLVEKVLPALEAGKLVIMDRFIDSSVAYQGFGRGLDIEAIDWLNQFATDGLKPDLTLYFDIEVEEGLARIAANSDREVNRLDLEGLDLHKKVRQGYLSLLDKEGNRIVKIDASLPLEQVVETTKAVLFDGMGLAK</sequence>
<evidence type="ECO:0000255" key="1">
    <source>
        <dbReference type="HAMAP-Rule" id="MF_00165"/>
    </source>
</evidence>